<gene>
    <name type="primary">atg22-2</name>
    <name type="ORF">AN7591</name>
</gene>
<reference key="1">
    <citation type="journal article" date="2005" name="Nature">
        <title>Sequencing of Aspergillus nidulans and comparative analysis with A. fumigatus and A. oryzae.</title>
        <authorList>
            <person name="Galagan J.E."/>
            <person name="Calvo S.E."/>
            <person name="Cuomo C."/>
            <person name="Ma L.-J."/>
            <person name="Wortman J.R."/>
            <person name="Batzoglou S."/>
            <person name="Lee S.-I."/>
            <person name="Bastuerkmen M."/>
            <person name="Spevak C.C."/>
            <person name="Clutterbuck J."/>
            <person name="Kapitonov V."/>
            <person name="Jurka J."/>
            <person name="Scazzocchio C."/>
            <person name="Farman M.L."/>
            <person name="Butler J."/>
            <person name="Purcell S."/>
            <person name="Harris S."/>
            <person name="Braus G.H."/>
            <person name="Draht O."/>
            <person name="Busch S."/>
            <person name="D'Enfert C."/>
            <person name="Bouchier C."/>
            <person name="Goldman G.H."/>
            <person name="Bell-Pedersen D."/>
            <person name="Griffiths-Jones S."/>
            <person name="Doonan J.H."/>
            <person name="Yu J."/>
            <person name="Vienken K."/>
            <person name="Pain A."/>
            <person name="Freitag M."/>
            <person name="Selker E.U."/>
            <person name="Archer D.B."/>
            <person name="Penalva M.A."/>
            <person name="Oakley B.R."/>
            <person name="Momany M."/>
            <person name="Tanaka T."/>
            <person name="Kumagai T."/>
            <person name="Asai K."/>
            <person name="Machida M."/>
            <person name="Nierman W.C."/>
            <person name="Denning D.W."/>
            <person name="Caddick M.X."/>
            <person name="Hynes M."/>
            <person name="Paoletti M."/>
            <person name="Fischer R."/>
            <person name="Miller B.L."/>
            <person name="Dyer P.S."/>
            <person name="Sachs M.S."/>
            <person name="Osmani S.A."/>
            <person name="Birren B.W."/>
        </authorList>
    </citation>
    <scope>NUCLEOTIDE SEQUENCE [LARGE SCALE GENOMIC DNA]</scope>
    <source>
        <strain>FGSC A4 / ATCC 38163 / CBS 112.46 / NRRL 194 / M139</strain>
    </source>
</reference>
<reference key="2">
    <citation type="journal article" date="2009" name="Fungal Genet. Biol.">
        <title>The 2008 update of the Aspergillus nidulans genome annotation: a community effort.</title>
        <authorList>
            <person name="Wortman J.R."/>
            <person name="Gilsenan J.M."/>
            <person name="Joardar V."/>
            <person name="Deegan J."/>
            <person name="Clutterbuck J."/>
            <person name="Andersen M.R."/>
            <person name="Archer D."/>
            <person name="Bencina M."/>
            <person name="Braus G."/>
            <person name="Coutinho P."/>
            <person name="von Dohren H."/>
            <person name="Doonan J."/>
            <person name="Driessen A.J."/>
            <person name="Durek P."/>
            <person name="Espeso E."/>
            <person name="Fekete E."/>
            <person name="Flipphi M."/>
            <person name="Estrada C.G."/>
            <person name="Geysens S."/>
            <person name="Goldman G."/>
            <person name="de Groot P.W."/>
            <person name="Hansen K."/>
            <person name="Harris S.D."/>
            <person name="Heinekamp T."/>
            <person name="Helmstaedt K."/>
            <person name="Henrissat B."/>
            <person name="Hofmann G."/>
            <person name="Homan T."/>
            <person name="Horio T."/>
            <person name="Horiuchi H."/>
            <person name="James S."/>
            <person name="Jones M."/>
            <person name="Karaffa L."/>
            <person name="Karanyi Z."/>
            <person name="Kato M."/>
            <person name="Keller N."/>
            <person name="Kelly D.E."/>
            <person name="Kiel J.A."/>
            <person name="Kim J.M."/>
            <person name="van der Klei I.J."/>
            <person name="Klis F.M."/>
            <person name="Kovalchuk A."/>
            <person name="Krasevec N."/>
            <person name="Kubicek C.P."/>
            <person name="Liu B."/>
            <person name="Maccabe A."/>
            <person name="Meyer V."/>
            <person name="Mirabito P."/>
            <person name="Miskei M."/>
            <person name="Mos M."/>
            <person name="Mullins J."/>
            <person name="Nelson D.R."/>
            <person name="Nielsen J."/>
            <person name="Oakley B.R."/>
            <person name="Osmani S.A."/>
            <person name="Pakula T."/>
            <person name="Paszewski A."/>
            <person name="Paulsen I."/>
            <person name="Pilsyk S."/>
            <person name="Pocsi I."/>
            <person name="Punt P.J."/>
            <person name="Ram A.F."/>
            <person name="Ren Q."/>
            <person name="Robellet X."/>
            <person name="Robson G."/>
            <person name="Seiboth B."/>
            <person name="van Solingen P."/>
            <person name="Specht T."/>
            <person name="Sun J."/>
            <person name="Taheri-Talesh N."/>
            <person name="Takeshita N."/>
            <person name="Ussery D."/>
            <person name="vanKuyk P.A."/>
            <person name="Visser H."/>
            <person name="van de Vondervoort P.J."/>
            <person name="de Vries R.P."/>
            <person name="Walton J."/>
            <person name="Xiang X."/>
            <person name="Xiong Y."/>
            <person name="Zeng A.P."/>
            <person name="Brandt B.W."/>
            <person name="Cornell M.J."/>
            <person name="van den Hondel C.A."/>
            <person name="Visser J."/>
            <person name="Oliver S.G."/>
            <person name="Turner G."/>
        </authorList>
    </citation>
    <scope>GENOME REANNOTATION</scope>
    <source>
        <strain>FGSC A4 / ATCC 38163 / CBS 112.46 / NRRL 194 / M139</strain>
    </source>
</reference>
<evidence type="ECO:0000250" key="1"/>
<evidence type="ECO:0000255" key="2"/>
<evidence type="ECO:0000256" key="3">
    <source>
        <dbReference type="SAM" id="MobiDB-lite"/>
    </source>
</evidence>
<evidence type="ECO:0000305" key="4"/>
<protein>
    <recommendedName>
        <fullName>Autophagy-related protein 22-2</fullName>
    </recommendedName>
</protein>
<keyword id="KW-0029">Amino-acid transport</keyword>
<keyword id="KW-0072">Autophagy</keyword>
<keyword id="KW-0325">Glycoprotein</keyword>
<keyword id="KW-0472">Membrane</keyword>
<keyword id="KW-1185">Reference proteome</keyword>
<keyword id="KW-0812">Transmembrane</keyword>
<keyword id="KW-1133">Transmembrane helix</keyword>
<keyword id="KW-0813">Transport</keyword>
<keyword id="KW-0926">Vacuole</keyword>
<proteinExistence type="inferred from homology"/>
<dbReference type="EMBL" id="AACD01000129">
    <property type="protein sequence ID" value="EAA62171.1"/>
    <property type="molecule type" value="Genomic_DNA"/>
</dbReference>
<dbReference type="EMBL" id="BN001304">
    <property type="protein sequence ID" value="CBF79696.1"/>
    <property type="molecule type" value="Genomic_DNA"/>
</dbReference>
<dbReference type="RefSeq" id="XP_680860.1">
    <property type="nucleotide sequence ID" value="XM_675768.1"/>
</dbReference>
<dbReference type="FunCoup" id="Q5AVT9">
    <property type="interactions" value="27"/>
</dbReference>
<dbReference type="STRING" id="227321.Q5AVT9"/>
<dbReference type="GlyCosmos" id="Q5AVT9">
    <property type="glycosylation" value="2 sites, No reported glycans"/>
</dbReference>
<dbReference type="EnsemblFungi" id="CBF79696">
    <property type="protein sequence ID" value="CBF79696"/>
    <property type="gene ID" value="ANIA_07591"/>
</dbReference>
<dbReference type="KEGG" id="ani:ANIA_07591"/>
<dbReference type="VEuPathDB" id="FungiDB:AN7591"/>
<dbReference type="eggNOG" id="ENOG502QVD3">
    <property type="taxonomic scope" value="Eukaryota"/>
</dbReference>
<dbReference type="HOGENOM" id="CLU_017518_1_0_1"/>
<dbReference type="InParanoid" id="Q5AVT9"/>
<dbReference type="OMA" id="QPWEIFP"/>
<dbReference type="OrthoDB" id="192733at2759"/>
<dbReference type="Proteomes" id="UP000000560">
    <property type="component" value="Chromosome IV"/>
</dbReference>
<dbReference type="GO" id="GO:0005774">
    <property type="term" value="C:vacuolar membrane"/>
    <property type="evidence" value="ECO:0007669"/>
    <property type="project" value="UniProtKB-SubCell"/>
</dbReference>
<dbReference type="GO" id="GO:0022857">
    <property type="term" value="F:transmembrane transporter activity"/>
    <property type="evidence" value="ECO:0007669"/>
    <property type="project" value="InterPro"/>
</dbReference>
<dbReference type="GO" id="GO:0032974">
    <property type="term" value="P:amino acid transmembrane export from vacuole"/>
    <property type="evidence" value="ECO:0000318"/>
    <property type="project" value="GO_Central"/>
</dbReference>
<dbReference type="GO" id="GO:0006914">
    <property type="term" value="P:autophagy"/>
    <property type="evidence" value="ECO:0007669"/>
    <property type="project" value="UniProtKB-KW"/>
</dbReference>
<dbReference type="CDD" id="cd17483">
    <property type="entry name" value="MFS_Atg22_like"/>
    <property type="match status" value="1"/>
</dbReference>
<dbReference type="Gene3D" id="1.20.1250.20">
    <property type="entry name" value="MFS general substrate transporter like domains"/>
    <property type="match status" value="1"/>
</dbReference>
<dbReference type="InterPro" id="IPR044738">
    <property type="entry name" value="Atg22"/>
</dbReference>
<dbReference type="InterPro" id="IPR024671">
    <property type="entry name" value="Atg22-like"/>
</dbReference>
<dbReference type="InterPro" id="IPR050495">
    <property type="entry name" value="ATG22/LtaA_families"/>
</dbReference>
<dbReference type="InterPro" id="IPR020846">
    <property type="entry name" value="MFS_dom"/>
</dbReference>
<dbReference type="InterPro" id="IPR036259">
    <property type="entry name" value="MFS_trans_sf"/>
</dbReference>
<dbReference type="PANTHER" id="PTHR23519">
    <property type="entry name" value="AUTOPHAGY-RELATED PROTEIN 22"/>
    <property type="match status" value="1"/>
</dbReference>
<dbReference type="PANTHER" id="PTHR23519:SF3">
    <property type="entry name" value="AUTOPHAGY-RELATED PROTEIN 22-2"/>
    <property type="match status" value="1"/>
</dbReference>
<dbReference type="Pfam" id="PF11700">
    <property type="entry name" value="ATG22"/>
    <property type="match status" value="1"/>
</dbReference>
<dbReference type="SUPFAM" id="SSF103473">
    <property type="entry name" value="MFS general substrate transporter"/>
    <property type="match status" value="1"/>
</dbReference>
<accession>Q5AVT9</accession>
<accession>C8VBT3</accession>
<feature type="chain" id="PRO_0000207623" description="Autophagy-related protein 22-2">
    <location>
        <begin position="1"/>
        <end position="593"/>
    </location>
</feature>
<feature type="transmembrane region" description="Helical" evidence="2">
    <location>
        <begin position="42"/>
        <end position="62"/>
    </location>
</feature>
<feature type="transmembrane region" description="Helical" evidence="2">
    <location>
        <begin position="112"/>
        <end position="132"/>
    </location>
</feature>
<feature type="transmembrane region" description="Helical" evidence="2">
    <location>
        <begin position="159"/>
        <end position="179"/>
    </location>
</feature>
<feature type="transmembrane region" description="Helical" evidence="2">
    <location>
        <begin position="181"/>
        <end position="201"/>
    </location>
</feature>
<feature type="transmembrane region" description="Helical" evidence="2">
    <location>
        <begin position="271"/>
        <end position="291"/>
    </location>
</feature>
<feature type="transmembrane region" description="Helical" evidence="2">
    <location>
        <begin position="305"/>
        <end position="325"/>
    </location>
</feature>
<feature type="transmembrane region" description="Helical" evidence="2">
    <location>
        <begin position="377"/>
        <end position="397"/>
    </location>
</feature>
<feature type="transmembrane region" description="Helical" evidence="2">
    <location>
        <begin position="415"/>
        <end position="435"/>
    </location>
</feature>
<feature type="transmembrane region" description="Helical" evidence="2">
    <location>
        <begin position="448"/>
        <end position="468"/>
    </location>
</feature>
<feature type="transmembrane region" description="Helical" evidence="2">
    <location>
        <begin position="480"/>
        <end position="500"/>
    </location>
</feature>
<feature type="transmembrane region" description="Helical" evidence="2">
    <location>
        <begin position="525"/>
        <end position="545"/>
    </location>
</feature>
<feature type="transmembrane region" description="Helical" evidence="2">
    <location>
        <begin position="548"/>
        <end position="568"/>
    </location>
</feature>
<feature type="region of interest" description="Disordered" evidence="3">
    <location>
        <begin position="228"/>
        <end position="261"/>
    </location>
</feature>
<feature type="glycosylation site" description="N-linked (GlcNAc...) asparagine" evidence="2">
    <location>
        <position position="90"/>
    </location>
</feature>
<feature type="glycosylation site" description="N-linked (GlcNAc...) asparagine" evidence="2">
    <location>
        <position position="443"/>
    </location>
</feature>
<organism>
    <name type="scientific">Emericella nidulans (strain FGSC A4 / ATCC 38163 / CBS 112.46 / NRRL 194 / M139)</name>
    <name type="common">Aspergillus nidulans</name>
    <dbReference type="NCBI Taxonomy" id="227321"/>
    <lineage>
        <taxon>Eukaryota</taxon>
        <taxon>Fungi</taxon>
        <taxon>Dikarya</taxon>
        <taxon>Ascomycota</taxon>
        <taxon>Pezizomycotina</taxon>
        <taxon>Eurotiomycetes</taxon>
        <taxon>Eurotiomycetidae</taxon>
        <taxon>Eurotiales</taxon>
        <taxon>Aspergillaceae</taxon>
        <taxon>Aspergillus</taxon>
        <taxon>Aspergillus subgen. Nidulantes</taxon>
    </lineage>
</organism>
<sequence>MASFSQLASSPEEPDFERRFLRYRGEDTSPTGRREIWGWYAYGVAAEVFAVCGVGSFLPLTLEQLAREQGFLSSSHLPCVGPDAPPAAGNGTAPANEACVVPLMGLEINTASFAMYTFSLAVLIQALTLVSFSALADYENNRKALLLAFGFIGSATSMLFMLIVPPVFVLGALLVVIGVTCLGSSFVVLNSFLPILVANDPSVQRASNKNKDDLHDLHTEGDEFSLRSWTDEEDTGDHAGPAGSKKAVEPEKASSSTSPELQLSTRISSRGVGLGYCAAVLVQILSILLLFTLSKTSMGKSHPTLPLRFVLLLVGIWWAAFTVVCSRWLRSRPGPPLEGVTPGAGYRQKWRVWLRVVGFAWKSLWNTIKVALRLREVVVFLAAWFLISDAIATVSGTAILFARTELHLSTVSVGLLSITATMSGMAGAFLWPIVARRFALASNHTILLCIALFEIIPLYGMLAYIPFIRNWGVLGLQKPWEIFPLGIVHGVVSGGLASYCRSLFGELIPPGSEAAFYALYAATDKGSSFVGPAIVGALIDATGSVRSGFIFIGVLILLPMPLVWLVNAERGRQDAIAMVKHAPNSEEGEGLLR</sequence>
<name>AT222_EMENI</name>
<comment type="function">
    <text evidence="1">Vacuolar effluxer which mediate the efflux of amino acids resulting from autophagic degradation. The release of autophagic amino acids allows the maintenance of protein synthesis and viability during nitrogen starvation (By similarity).</text>
</comment>
<comment type="subcellular location">
    <subcellularLocation>
        <location evidence="1">Vacuole membrane</location>
        <topology evidence="1">Multi-pass membrane protein</topology>
    </subcellularLocation>
    <text evidence="1">Vacuole and punctate structures.</text>
</comment>
<comment type="similarity">
    <text evidence="4">Belongs to the ATG22 family.</text>
</comment>